<reference key="1">
    <citation type="submission" date="2007-03" db="EMBL/GenBank/DDBJ databases">
        <authorList>
            <consortium name="NIH - Xenopus Gene Collection (XGC) project"/>
        </authorList>
    </citation>
    <scope>NUCLEOTIDE SEQUENCE [LARGE SCALE MRNA]</scope>
    <source>
        <tissue>Brain</tissue>
    </source>
</reference>
<proteinExistence type="evidence at transcript level"/>
<gene>
    <name type="primary">mab21l2</name>
</gene>
<protein>
    <recommendedName>
        <fullName>Protein mab-21-like 2</fullName>
    </recommendedName>
</protein>
<evidence type="ECO:0000250" key="1">
    <source>
        <dbReference type="UniProtKB" id="Q8BPP1"/>
    </source>
</evidence>
<evidence type="ECO:0000250" key="2">
    <source>
        <dbReference type="UniProtKB" id="Q9Y586"/>
    </source>
</evidence>
<evidence type="ECO:0000305" key="3"/>
<comment type="function">
    <text evidence="1">Required for several aspects of embryonic development including normal development of the eye.</text>
</comment>
<comment type="subcellular location">
    <subcellularLocation>
        <location evidence="2">Nucleus</location>
    </subcellularLocation>
    <subcellularLocation>
        <location evidence="2">Cytoplasm</location>
    </subcellularLocation>
    <text evidence="2">Predominantly localizes to the nucleus, with some cytoplasmic localization.</text>
</comment>
<comment type="similarity">
    <text evidence="3">Belongs to the mab-21 family.</text>
</comment>
<name>MB212_XENTR</name>
<sequence length="359" mass="40858">MIAAQAKLVYQLNKYYSERCQARKAAIAKTIREVCKVVSDVLKEVEVQEPRFISSLTEIDARYEGLEVVSPTEFEVVLYLNQMGVFNFVDDGSLPGCAVLKLSDGRKRSMSLWVEFITASGYLSARKIRSRFQTLVAQAVDKCSYRDVVKMIADTSEVKLRIRERYIVQITPAFKCTGIWPRSAAQWPLPHIPWPGPNRVAEVKAEGFNLLSKECYSLTGKQSSAESDAWVLQFAEAENRLLLGGCRSKCLSVLKTLRDRHLELPGQPLNNYHMKTLLLYECEKHPRETDWDEACLGDRLNGILLQLISCLQCRRCPHYFLPNLDLFQGKPHSALESAAKQTWRLAREILTNPKSLDKL</sequence>
<feature type="chain" id="PRO_0000312792" description="Protein mab-21-like 2">
    <location>
        <begin position="1"/>
        <end position="359"/>
    </location>
</feature>
<dbReference type="EMBL" id="BC136175">
    <property type="protein sequence ID" value="AAI36176.1"/>
    <property type="molecule type" value="mRNA"/>
</dbReference>
<dbReference type="RefSeq" id="NP_001096455.1">
    <property type="nucleotide sequence ID" value="NM_001102985.1"/>
</dbReference>
<dbReference type="SMR" id="A4IIW0"/>
<dbReference type="FunCoup" id="A4IIW0">
    <property type="interactions" value="577"/>
</dbReference>
<dbReference type="STRING" id="8364.ENSXETP00000041830"/>
<dbReference type="DNASU" id="100125071"/>
<dbReference type="GeneID" id="100125071"/>
<dbReference type="KEGG" id="xtr:100125071"/>
<dbReference type="AGR" id="Xenbase:XB-GENE-983448"/>
<dbReference type="CTD" id="10586"/>
<dbReference type="Xenbase" id="XB-GENE-983448">
    <property type="gene designation" value="mab21l2"/>
</dbReference>
<dbReference type="InParanoid" id="A4IIW0"/>
<dbReference type="OMA" id="WDESCIA"/>
<dbReference type="OrthoDB" id="5961151at2759"/>
<dbReference type="Proteomes" id="UP000008143">
    <property type="component" value="Chromosome 1"/>
</dbReference>
<dbReference type="Bgee" id="ENSXETG00000037146">
    <property type="expression patterns" value="Expressed in neurula embryo and 5 other cell types or tissues"/>
</dbReference>
<dbReference type="GO" id="GO:0005737">
    <property type="term" value="C:cytoplasm"/>
    <property type="evidence" value="ECO:0000250"/>
    <property type="project" value="UniProtKB"/>
</dbReference>
<dbReference type="GO" id="GO:0005634">
    <property type="term" value="C:nucleus"/>
    <property type="evidence" value="ECO:0000250"/>
    <property type="project" value="UniProtKB"/>
</dbReference>
<dbReference type="GO" id="GO:0001654">
    <property type="term" value="P:eye development"/>
    <property type="evidence" value="ECO:0000250"/>
    <property type="project" value="UniProtKB"/>
</dbReference>
<dbReference type="FunFam" id="1.10.1410.40:FF:000002">
    <property type="entry name" value="protein mab-21-like 1"/>
    <property type="match status" value="1"/>
</dbReference>
<dbReference type="FunFam" id="3.30.460.90:FF:000001">
    <property type="entry name" value="protein mab-21-like 2"/>
    <property type="match status" value="1"/>
</dbReference>
<dbReference type="Gene3D" id="1.10.1410.40">
    <property type="match status" value="1"/>
</dbReference>
<dbReference type="Gene3D" id="3.30.460.90">
    <property type="match status" value="1"/>
</dbReference>
<dbReference type="InterPro" id="IPR046903">
    <property type="entry name" value="Mab-21-like_nuc_Trfase"/>
</dbReference>
<dbReference type="InterPro" id="IPR046906">
    <property type="entry name" value="Mab-21_HhH/H2TH-like"/>
</dbReference>
<dbReference type="InterPro" id="IPR024810">
    <property type="entry name" value="MAB21L/cGLR"/>
</dbReference>
<dbReference type="PANTHER" id="PTHR10656">
    <property type="entry name" value="CELL FATE DETERMINING PROTEIN MAB21-RELATED"/>
    <property type="match status" value="1"/>
</dbReference>
<dbReference type="PANTHER" id="PTHR10656:SF37">
    <property type="entry name" value="PROTEIN MAB-21-LIKE 2"/>
    <property type="match status" value="1"/>
</dbReference>
<dbReference type="Pfam" id="PF03281">
    <property type="entry name" value="Mab-21"/>
    <property type="match status" value="1"/>
</dbReference>
<dbReference type="Pfam" id="PF20266">
    <property type="entry name" value="Mab-21_C"/>
    <property type="match status" value="1"/>
</dbReference>
<dbReference type="SMART" id="SM01265">
    <property type="entry name" value="Mab-21"/>
    <property type="match status" value="1"/>
</dbReference>
<organism>
    <name type="scientific">Xenopus tropicalis</name>
    <name type="common">Western clawed frog</name>
    <name type="synonym">Silurana tropicalis</name>
    <dbReference type="NCBI Taxonomy" id="8364"/>
    <lineage>
        <taxon>Eukaryota</taxon>
        <taxon>Metazoa</taxon>
        <taxon>Chordata</taxon>
        <taxon>Craniata</taxon>
        <taxon>Vertebrata</taxon>
        <taxon>Euteleostomi</taxon>
        <taxon>Amphibia</taxon>
        <taxon>Batrachia</taxon>
        <taxon>Anura</taxon>
        <taxon>Pipoidea</taxon>
        <taxon>Pipidae</taxon>
        <taxon>Xenopodinae</taxon>
        <taxon>Xenopus</taxon>
        <taxon>Silurana</taxon>
    </lineage>
</organism>
<keyword id="KW-0963">Cytoplasm</keyword>
<keyword id="KW-0217">Developmental protein</keyword>
<keyword id="KW-0539">Nucleus</keyword>
<keyword id="KW-1185">Reference proteome</keyword>
<accession>A4IIW0</accession>